<feature type="chain" id="PRO_1000215162" description="ATP synthase subunit c">
    <location>
        <begin position="1"/>
        <end position="71"/>
    </location>
</feature>
<feature type="transmembrane region" description="Helical" evidence="1">
    <location>
        <begin position="9"/>
        <end position="29"/>
    </location>
</feature>
<feature type="transmembrane region" description="Helical" evidence="1">
    <location>
        <begin position="49"/>
        <end position="69"/>
    </location>
</feature>
<feature type="site" description="Reversibly protonated during proton transport" evidence="1">
    <location>
        <position position="56"/>
    </location>
</feature>
<keyword id="KW-0066">ATP synthesis</keyword>
<keyword id="KW-1003">Cell membrane</keyword>
<keyword id="KW-0138">CF(0)</keyword>
<keyword id="KW-0375">Hydrogen ion transport</keyword>
<keyword id="KW-0406">Ion transport</keyword>
<keyword id="KW-0446">Lipid-binding</keyword>
<keyword id="KW-0472">Membrane</keyword>
<keyword id="KW-1185">Reference proteome</keyword>
<keyword id="KW-0812">Transmembrane</keyword>
<keyword id="KW-1133">Transmembrane helix</keyword>
<keyword id="KW-0813">Transport</keyword>
<name>ATPL_MICLC</name>
<comment type="function">
    <text evidence="1">F(1)F(0) ATP synthase produces ATP from ADP in the presence of a proton or sodium gradient. F-type ATPases consist of two structural domains, F(1) containing the extramembraneous catalytic core and F(0) containing the membrane proton channel, linked together by a central stalk and a peripheral stalk. During catalysis, ATP synthesis in the catalytic domain of F(1) is coupled via a rotary mechanism of the central stalk subunits to proton translocation.</text>
</comment>
<comment type="function">
    <text evidence="1">Key component of the F(0) channel; it plays a direct role in translocation across the membrane. A homomeric c-ring of between 10-14 subunits forms the central stalk rotor element with the F(1) delta and epsilon subunits.</text>
</comment>
<comment type="subunit">
    <text evidence="1">F-type ATPases have 2 components, F(1) - the catalytic core - and F(0) - the membrane proton channel. F(1) has five subunits: alpha(3), beta(3), gamma(1), delta(1), epsilon(1). F(0) has three main subunits: a(1), b(2) and c(10-14). The alpha and beta chains form an alternating ring which encloses part of the gamma chain. F(1) is attached to F(0) by a central stalk formed by the gamma and epsilon chains, while a peripheral stalk is formed by the delta and b chains.</text>
</comment>
<comment type="subcellular location">
    <subcellularLocation>
        <location evidence="1">Cell membrane</location>
        <topology evidence="1">Multi-pass membrane protein</topology>
    </subcellularLocation>
</comment>
<comment type="similarity">
    <text evidence="1">Belongs to the ATPase C chain family.</text>
</comment>
<protein>
    <recommendedName>
        <fullName evidence="1">ATP synthase subunit c</fullName>
    </recommendedName>
    <alternativeName>
        <fullName evidence="1">ATP synthase F(0) sector subunit c</fullName>
    </alternativeName>
    <alternativeName>
        <fullName evidence="1">F-type ATPase subunit c</fullName>
        <shortName evidence="1">F-ATPase subunit c</shortName>
    </alternativeName>
    <alternativeName>
        <fullName evidence="1">Lipid-binding protein</fullName>
    </alternativeName>
</protein>
<accession>C5CA73</accession>
<proteinExistence type="inferred from homology"/>
<reference key="1">
    <citation type="journal article" date="2010" name="J. Bacteriol.">
        <title>Genome sequence of the Fleming strain of Micrococcus luteus, a simple free-living actinobacterium.</title>
        <authorList>
            <person name="Young M."/>
            <person name="Artsatbanov V."/>
            <person name="Beller H.R."/>
            <person name="Chandra G."/>
            <person name="Chater K.F."/>
            <person name="Dover L.G."/>
            <person name="Goh E.B."/>
            <person name="Kahan T."/>
            <person name="Kaprelyants A.S."/>
            <person name="Kyrpides N."/>
            <person name="Lapidus A."/>
            <person name="Lowry S.R."/>
            <person name="Lykidis A."/>
            <person name="Mahillon J."/>
            <person name="Markowitz V."/>
            <person name="Mavromatis K."/>
            <person name="Mukamolova G.V."/>
            <person name="Oren A."/>
            <person name="Rokem J.S."/>
            <person name="Smith M.C."/>
            <person name="Young D.I."/>
            <person name="Greenblatt C.L."/>
        </authorList>
    </citation>
    <scope>NUCLEOTIDE SEQUENCE [LARGE SCALE GENOMIC DNA]</scope>
    <source>
        <strain>ATCC 4698 / DSM 20030 / JCM 1464 / CCM 169 / CCUG 5858 / IAM 1056 / NBRC 3333 / NCIMB 9278 / NCTC 2665 / VKM Ac-2230</strain>
    </source>
</reference>
<sequence length="71" mass="7239">MELHGSLNMIGYGLAAIGSAIGVGLIFAAYINGVARQPEAQRILQPIALLGFALAEALAILGLVFAFVIGA</sequence>
<evidence type="ECO:0000255" key="1">
    <source>
        <dbReference type="HAMAP-Rule" id="MF_01396"/>
    </source>
</evidence>
<organism>
    <name type="scientific">Micrococcus luteus (strain ATCC 4698 / DSM 20030 / JCM 1464 / CCM 169 / CCUG 5858 / IAM 1056 / NBRC 3333 / NCIMB 9278 / NCTC 2665 / VKM Ac-2230)</name>
    <name type="common">Micrococcus lysodeikticus</name>
    <dbReference type="NCBI Taxonomy" id="465515"/>
    <lineage>
        <taxon>Bacteria</taxon>
        <taxon>Bacillati</taxon>
        <taxon>Actinomycetota</taxon>
        <taxon>Actinomycetes</taxon>
        <taxon>Micrococcales</taxon>
        <taxon>Micrococcaceae</taxon>
        <taxon>Micrococcus</taxon>
    </lineage>
</organism>
<dbReference type="EMBL" id="CP001628">
    <property type="protein sequence ID" value="ACS30342.1"/>
    <property type="molecule type" value="Genomic_DNA"/>
</dbReference>
<dbReference type="RefSeq" id="WP_002857264.1">
    <property type="nucleotide sequence ID" value="NZ_WBMF01000002.1"/>
</dbReference>
<dbReference type="SMR" id="C5CA73"/>
<dbReference type="STRING" id="465515.Mlut_08130"/>
<dbReference type="EnsemblBacteria" id="ACS30342">
    <property type="protein sequence ID" value="ACS30342"/>
    <property type="gene ID" value="Mlut_08130"/>
</dbReference>
<dbReference type="KEGG" id="mlu:Mlut_08130"/>
<dbReference type="eggNOG" id="COG0636">
    <property type="taxonomic scope" value="Bacteria"/>
</dbReference>
<dbReference type="HOGENOM" id="CLU_148047_5_2_11"/>
<dbReference type="Proteomes" id="UP000000738">
    <property type="component" value="Chromosome"/>
</dbReference>
<dbReference type="GO" id="GO:0005886">
    <property type="term" value="C:plasma membrane"/>
    <property type="evidence" value="ECO:0007669"/>
    <property type="project" value="UniProtKB-SubCell"/>
</dbReference>
<dbReference type="GO" id="GO:0045259">
    <property type="term" value="C:proton-transporting ATP synthase complex"/>
    <property type="evidence" value="ECO:0007669"/>
    <property type="project" value="UniProtKB-KW"/>
</dbReference>
<dbReference type="GO" id="GO:0033177">
    <property type="term" value="C:proton-transporting two-sector ATPase complex, proton-transporting domain"/>
    <property type="evidence" value="ECO:0007669"/>
    <property type="project" value="InterPro"/>
</dbReference>
<dbReference type="GO" id="GO:0008289">
    <property type="term" value="F:lipid binding"/>
    <property type="evidence" value="ECO:0007669"/>
    <property type="project" value="UniProtKB-KW"/>
</dbReference>
<dbReference type="GO" id="GO:0046933">
    <property type="term" value="F:proton-transporting ATP synthase activity, rotational mechanism"/>
    <property type="evidence" value="ECO:0007669"/>
    <property type="project" value="UniProtKB-UniRule"/>
</dbReference>
<dbReference type="Gene3D" id="1.20.20.10">
    <property type="entry name" value="F1F0 ATP synthase subunit C"/>
    <property type="match status" value="1"/>
</dbReference>
<dbReference type="HAMAP" id="MF_01396">
    <property type="entry name" value="ATP_synth_c_bact"/>
    <property type="match status" value="1"/>
</dbReference>
<dbReference type="InterPro" id="IPR000454">
    <property type="entry name" value="ATP_synth_F0_csu"/>
</dbReference>
<dbReference type="InterPro" id="IPR020537">
    <property type="entry name" value="ATP_synth_F0_csu_DDCD_BS"/>
</dbReference>
<dbReference type="InterPro" id="IPR038662">
    <property type="entry name" value="ATP_synth_F0_csu_sf"/>
</dbReference>
<dbReference type="InterPro" id="IPR002379">
    <property type="entry name" value="ATPase_proteolipid_c-like_dom"/>
</dbReference>
<dbReference type="InterPro" id="IPR035921">
    <property type="entry name" value="F/V-ATP_Csub_sf"/>
</dbReference>
<dbReference type="PANTHER" id="PTHR10031">
    <property type="entry name" value="ATP SYNTHASE LIPID-BINDING PROTEIN, MITOCHONDRIAL"/>
    <property type="match status" value="1"/>
</dbReference>
<dbReference type="PANTHER" id="PTHR10031:SF0">
    <property type="entry name" value="ATPASE PROTEIN 9"/>
    <property type="match status" value="1"/>
</dbReference>
<dbReference type="Pfam" id="PF00137">
    <property type="entry name" value="ATP-synt_C"/>
    <property type="match status" value="1"/>
</dbReference>
<dbReference type="PRINTS" id="PR00124">
    <property type="entry name" value="ATPASEC"/>
</dbReference>
<dbReference type="SUPFAM" id="SSF81333">
    <property type="entry name" value="F1F0 ATP synthase subunit C"/>
    <property type="match status" value="1"/>
</dbReference>
<dbReference type="PROSITE" id="PS00605">
    <property type="entry name" value="ATPASE_C"/>
    <property type="match status" value="1"/>
</dbReference>
<gene>
    <name evidence="1" type="primary">atpE</name>
    <name type="ordered locus">Mlut_08130</name>
</gene>